<protein>
    <recommendedName>
        <fullName>Serine carboxypeptidase 2</fullName>
        <ecNumber>3.4.16.6</ecNumber>
    </recommendedName>
    <alternativeName>
        <fullName>CP-MII</fullName>
    </alternativeName>
    <alternativeName>
        <fullName>Carboxypeptidase D</fullName>
    </alternativeName>
    <alternativeName>
        <fullName>Serine carboxypeptidase II</fullName>
    </alternativeName>
    <component>
        <recommendedName>
            <fullName>Serine carboxypeptidase 2 chain A</fullName>
        </recommendedName>
        <alternativeName>
            <fullName>Serine carboxypeptidase II chain A</fullName>
        </alternativeName>
    </component>
    <component>
        <recommendedName>
            <fullName>Serine carboxypeptidase 2 chain B</fullName>
        </recommendedName>
        <alternativeName>
            <fullName>Serine carboxypeptidase II chain B</fullName>
        </alternativeName>
    </component>
</protein>
<name>CBP2_HORVU</name>
<dbReference type="EC" id="3.4.16.6"/>
<dbReference type="EMBL" id="Y09602">
    <property type="protein sequence ID" value="CAA70815.1"/>
    <property type="molecule type" value="Genomic_DNA"/>
</dbReference>
<dbReference type="PIR" id="T05701">
    <property type="entry name" value="T05701"/>
</dbReference>
<dbReference type="SMR" id="P08818"/>
<dbReference type="ESTHER" id="horvu-cbp2">
    <property type="family name" value="Carboxypeptidase_S10"/>
</dbReference>
<dbReference type="MEROPS" id="S10.005"/>
<dbReference type="GlyCosmos" id="P08818">
    <property type="glycosylation" value="7 sites, No reported glycans"/>
</dbReference>
<dbReference type="ExpressionAtlas" id="P08818">
    <property type="expression patterns" value="differential"/>
</dbReference>
<dbReference type="GO" id="GO:0005576">
    <property type="term" value="C:extracellular region"/>
    <property type="evidence" value="ECO:0007669"/>
    <property type="project" value="UniProtKB-SubCell"/>
</dbReference>
<dbReference type="GO" id="GO:0005773">
    <property type="term" value="C:vacuole"/>
    <property type="evidence" value="ECO:0007669"/>
    <property type="project" value="TreeGrafter"/>
</dbReference>
<dbReference type="GO" id="GO:0004185">
    <property type="term" value="F:serine-type carboxypeptidase activity"/>
    <property type="evidence" value="ECO:0007669"/>
    <property type="project" value="UniProtKB-EC"/>
</dbReference>
<dbReference type="GO" id="GO:0006508">
    <property type="term" value="P:proteolysis"/>
    <property type="evidence" value="ECO:0007669"/>
    <property type="project" value="UniProtKB-KW"/>
</dbReference>
<dbReference type="FunFam" id="3.40.50.11320:FF:000003">
    <property type="entry name" value="Carboxypeptidase"/>
    <property type="match status" value="1"/>
</dbReference>
<dbReference type="FunFam" id="3.40.50.12670:FF:000002">
    <property type="entry name" value="Carboxypeptidase"/>
    <property type="match status" value="1"/>
</dbReference>
<dbReference type="FunFam" id="3.40.50.1820:FF:000013">
    <property type="entry name" value="Carboxypeptidase"/>
    <property type="match status" value="1"/>
</dbReference>
<dbReference type="Gene3D" id="3.40.50.11320">
    <property type="match status" value="1"/>
</dbReference>
<dbReference type="Gene3D" id="6.10.250.940">
    <property type="match status" value="1"/>
</dbReference>
<dbReference type="Gene3D" id="3.40.50.1820">
    <property type="entry name" value="alpha/beta hydrolase"/>
    <property type="match status" value="1"/>
</dbReference>
<dbReference type="InterPro" id="IPR029058">
    <property type="entry name" value="AB_hydrolase_fold"/>
</dbReference>
<dbReference type="InterPro" id="IPR001563">
    <property type="entry name" value="Peptidase_S10"/>
</dbReference>
<dbReference type="InterPro" id="IPR033124">
    <property type="entry name" value="Ser_caboxypep_his_AS"/>
</dbReference>
<dbReference type="InterPro" id="IPR018202">
    <property type="entry name" value="Ser_caboxypep_ser_AS"/>
</dbReference>
<dbReference type="PANTHER" id="PTHR11802:SF198">
    <property type="entry name" value="SERINE CARBOXYPEPTIDASE-LIKE 27"/>
    <property type="match status" value="1"/>
</dbReference>
<dbReference type="PANTHER" id="PTHR11802">
    <property type="entry name" value="SERINE PROTEASE FAMILY S10 SERINE CARBOXYPEPTIDASE"/>
    <property type="match status" value="1"/>
</dbReference>
<dbReference type="Pfam" id="PF00450">
    <property type="entry name" value="Peptidase_S10"/>
    <property type="match status" value="1"/>
</dbReference>
<dbReference type="PRINTS" id="PR00724">
    <property type="entry name" value="CRBOXYPTASEC"/>
</dbReference>
<dbReference type="SUPFAM" id="SSF53474">
    <property type="entry name" value="alpha/beta-Hydrolases"/>
    <property type="match status" value="1"/>
</dbReference>
<dbReference type="PROSITE" id="PS00560">
    <property type="entry name" value="CARBOXYPEPT_SER_HIS"/>
    <property type="match status" value="1"/>
</dbReference>
<dbReference type="PROSITE" id="PS00131">
    <property type="entry name" value="CARBOXYPEPT_SER_SER"/>
    <property type="match status" value="1"/>
</dbReference>
<organism>
    <name type="scientific">Hordeum vulgare</name>
    <name type="common">Barley</name>
    <dbReference type="NCBI Taxonomy" id="4513"/>
    <lineage>
        <taxon>Eukaryota</taxon>
        <taxon>Viridiplantae</taxon>
        <taxon>Streptophyta</taxon>
        <taxon>Embryophyta</taxon>
        <taxon>Tracheophyta</taxon>
        <taxon>Spermatophyta</taxon>
        <taxon>Magnoliopsida</taxon>
        <taxon>Liliopsida</taxon>
        <taxon>Poales</taxon>
        <taxon>Poaceae</taxon>
        <taxon>BOP clade</taxon>
        <taxon>Pooideae</taxon>
        <taxon>Triticodae</taxon>
        <taxon>Triticeae</taxon>
        <taxon>Hordeinae</taxon>
        <taxon>Hordeum</taxon>
    </lineage>
</organism>
<comment type="function">
    <text>May be involved in the degradation of small peptides (2-5 residues) or in the degradation of storage proteins in the embryo.</text>
</comment>
<comment type="catalytic activity">
    <reaction>
        <text>Preferential release of a C-terminal arginine or lysine residue.</text>
        <dbReference type="EC" id="3.4.16.6"/>
    </reaction>
</comment>
<comment type="subunit">
    <text>Carboxypeptidase II is a dimer, where each monomer is composed of two chains linked by a disulfide bond.</text>
</comment>
<comment type="subcellular location">
    <subcellularLocation>
        <location>Secreted</location>
    </subcellularLocation>
    <text>Secreted into the endosperm.</text>
</comment>
<comment type="developmental stage">
    <text>Simultaneously present in aleurone and endosperm between 20 and 30 days postanthesis. Accumulates in the developing grain and is stored in its active form in the mature grain. Also found in the roots and shoots of the growing seedling.</text>
</comment>
<comment type="similarity">
    <text evidence="3">Belongs to the peptidase S10 family.</text>
</comment>
<sequence length="476" mass="52625">MRTTTRRLPPAPAAAAVLLAALTCLLLRPAAVAAAGGHAADRIVRLPGQPEVDFDMYSGYITVDEAAGRSLFYLLQEAPEEAQPAPLVLWLNGGPGCSSVAYGASEELGAFRVMPRGAGLVLNEYRWNKVANVLFLDSPAGVGFSYTNTSSDIYTSGDNRTAHDSYAFLAAWFERFPHYKYREFYVAGESYAGHYVPELSQLVHRSGNPVINLKGFMVGNGLIDDYHDYVGTFEFWWNHGIVSDDTYRRLKDACLHDSFIHPSPACDAATDVATAEQGNIDMYSLYTPVCNISSSSSSSSLSRRRTRGRYPWLTGSYDPCTERYSTAYYNRRDVQTALHANVTGAMNYTWTNCSDTINTHWHDAPRSMLPIYRELIAAGLRIWVFSGDTDAVVPLTATRYSIGALGLATTTSWYPWYDDLQEVGGWSQVYKGLTLVSVRGAGHEVPLHRPRQALILFQQFLQGKPMPGRTTNVTVA</sequence>
<keyword id="KW-0121">Carboxypeptidase</keyword>
<keyword id="KW-0903">Direct protein sequencing</keyword>
<keyword id="KW-1015">Disulfide bond</keyword>
<keyword id="KW-0325">Glycoprotein</keyword>
<keyword id="KW-0378">Hydrolase</keyword>
<keyword id="KW-0645">Protease</keyword>
<keyword id="KW-0964">Secreted</keyword>
<keyword id="KW-0732">Signal</keyword>
<keyword id="KW-0865">Zymogen</keyword>
<gene>
    <name type="primary">CBP2</name>
    <name type="synonym">CXP;2</name>
</gene>
<reference key="1">
    <citation type="submission" date="1996-11" db="EMBL/GenBank/DDBJ databases">
        <title>The gene family of serine carboxypeptidases in barley.</title>
        <authorList>
            <person name="Rocher A."/>
            <person name="Lok F."/>
            <person name="Cameron-Mills V."/>
            <person name="von Wettstein D."/>
        </authorList>
    </citation>
    <scope>NUCLEOTIDE SEQUENCE [GENOMIC DNA]</scope>
    <source>
        <strain>cv. Igri</strain>
        <tissue>Etiolated leaf</tissue>
    </source>
</reference>
<reference key="2">
    <citation type="journal article" date="1987" name="Carlsberg Res. Commun.">
        <title>Primary structure of carboxypeptidase II from malted barley.</title>
        <authorList>
            <person name="Soerensen S.B."/>
            <person name="Svendsen I."/>
            <person name="Breddam K."/>
        </authorList>
    </citation>
    <scope>PROTEIN SEQUENCE OF 35-294 AND 314-472</scope>
    <scope>GLYCOSYLATION OF VARIANT 351-AT-352</scope>
</reference>
<accession>P08818</accession>
<accession>P93177</accession>
<evidence type="ECO:0000250" key="1"/>
<evidence type="ECO:0000269" key="2">
    <source ref="2"/>
</evidence>
<evidence type="ECO:0000305" key="3"/>
<proteinExistence type="evidence at protein level"/>
<feature type="signal peptide" evidence="2">
    <location>
        <begin position="1"/>
        <end position="34"/>
    </location>
</feature>
<feature type="chain" id="PRO_0000004309" description="Serine carboxypeptidase 2 chain A">
    <location>
        <begin position="35"/>
        <end position="294"/>
    </location>
</feature>
<feature type="propeptide" id="PRO_0000004310" description="Linker peptide" evidence="1">
    <location>
        <begin position="295"/>
        <end position="313"/>
    </location>
</feature>
<feature type="chain" id="PRO_0000004311" description="Serine carboxypeptidase 2 chain B">
    <location>
        <begin position="314"/>
        <end position="476"/>
    </location>
</feature>
<feature type="active site" evidence="1">
    <location>
        <position position="190"/>
    </location>
</feature>
<feature type="active site" evidence="1">
    <location>
        <position position="390"/>
    </location>
</feature>
<feature type="active site" evidence="1">
    <location>
        <position position="443"/>
    </location>
</feature>
<feature type="modified residue" description="Blocked amino end (Thr)">
    <location>
        <position position="314"/>
    </location>
</feature>
<feature type="glycosylation site" description="N-linked (GlcNAc...) asparagine">
    <location>
        <position position="148"/>
    </location>
</feature>
<feature type="glycosylation site" description="N-linked (GlcNAc...) asparagine">
    <location>
        <position position="159"/>
    </location>
</feature>
<feature type="glycosylation site" description="N-linked (GlcNAc...) asparagine">
    <location>
        <position position="291"/>
    </location>
</feature>
<feature type="glycosylation site" description="N-linked (GlcNAc...) asparagine">
    <location>
        <position position="341"/>
    </location>
</feature>
<feature type="glycosylation site" description="N-linked (GlcNAc...) asparagine">
    <location>
        <position position="347"/>
    </location>
</feature>
<feature type="glycosylation site" description="N-linked (GlcNAc...) asparagine; partial">
    <location>
        <position position="352"/>
    </location>
</feature>
<feature type="glycosylation site" description="O-linked (GalNAc...) threonine; in variant 351-AT-352">
    <location>
        <position position="352"/>
    </location>
</feature>
<feature type="glycosylation site" description="N-linked (GlcNAc...) asparagine">
    <location>
        <position position="472"/>
    </location>
</feature>
<feature type="disulfide bond" description="Interchain (between A and B chains)" evidence="1">
    <location>
        <begin position="97"/>
        <end position="353"/>
    </location>
</feature>
<feature type="disulfide bond" evidence="1">
    <location>
        <begin position="254"/>
        <end position="266"/>
    </location>
</feature>
<feature type="disulfide bond" description="Interchain (between A and B chains)" evidence="1">
    <location>
        <begin position="290"/>
        <end position="320"/>
    </location>
</feature>
<feature type="sequence variant">
    <original>TN</original>
    <variation>AT</variation>
    <location>
        <begin position="351"/>
        <end position="352"/>
    </location>
</feature>
<feature type="sequence conflict" description="In Ref. 2; AA sequence." evidence="3" ref="2">
    <original>Y</original>
    <variation>R</variation>
    <location>
        <position position="181"/>
    </location>
</feature>